<comment type="function">
    <text evidence="1 3 8">Alpha subunit of the heteropentameric ligand-gated chloride channel gated by gamma-aminobutyric acid (GABA), a major inhibitory neurotransmitter in the brain (PubMed:2153588). GABA-gated chloride channels, also named GABA(A) receptors (GABAAR), consist of five subunits arranged around a central pore and contain GABA active binding site(s) located at the alpha and beta subunit interface(s) (By similarity). When activated by GABA, GABAARs selectively allow the flow of chloride anions across the cell membrane down their electrochemical gradient (By similarity). Chloride influx into the postsynaptic neuron following GABAAR opening decreases the neuron ability to generate a new action potential, thereby reducing nerve transmission (By similarity).</text>
</comment>
<comment type="catalytic activity">
    <reaction evidence="3">
        <text>chloride(in) = chloride(out)</text>
        <dbReference type="Rhea" id="RHEA:29823"/>
        <dbReference type="ChEBI" id="CHEBI:17996"/>
    </reaction>
</comment>
<comment type="subunit">
    <text evidence="2 3">Heteropentamer, formed by a combination of alpha (GABRA1-6), beta (GABRB1-3), gamma (GABRG1-3), delta (GABRD), epsilon (GABRE), rho (GABRR1-3), pi (GABRP) and theta (GABRQ) chains, each subunit exhibiting distinct physiological and pharmacological properties (By similarity). Binds UBQLN1 (By similarity). Interacts with GPHN (By similarity).</text>
</comment>
<comment type="interaction">
    <interactant intactId="EBI-5273284">
        <id>P20236</id>
    </interactant>
    <interactant intactId="EBI-5273276">
        <id>Q03555-6</id>
        <label>Gphn</label>
    </interactant>
    <organismsDiffer>false</organismsDiffer>
    <experiments>5</experiments>
</comment>
<comment type="subcellular location">
    <subcellularLocation>
        <location evidence="1">Postsynaptic cell membrane</location>
        <topology>Multi-pass membrane protein</topology>
    </subcellularLocation>
    <subcellularLocation>
        <location evidence="1">Cell membrane</location>
        <topology>Multi-pass membrane protein</topology>
    </subcellularLocation>
</comment>
<comment type="tissue specificity">
    <text evidence="7 8">Expressed in most brain regions. Expressed in lungs, in alveolar epithelium (PubMed:17003036).</text>
</comment>
<comment type="domain">
    <text evidence="1">GABAARs subunits share a common topological structure: a peptide sequence made up of a long extracellular N-terminal, four transmembrane domains, intracellular or cytoplasmic domain located between the third and the fourth transmembrane domains.</text>
</comment>
<comment type="similarity">
    <text evidence="9">Belongs to the ligand-gated ion channel (TC 1.A.9) family. Gamma-aminobutyric acid receptor (TC 1.A.9.5) subfamily. GABRA3 sub-subfamily.</text>
</comment>
<reference key="1">
    <citation type="journal article" date="1990" name="FEBS Lett.">
        <title>Functional expression and sites of gene transcription of a novel alpha subunit of the GABAA receptor in rat brain.</title>
        <authorList>
            <person name="Malherbe P."/>
            <person name="Sigel E."/>
            <person name="Baur R."/>
            <person name="Persohn E."/>
            <person name="Richards J.G."/>
            <person name="Moehler H."/>
        </authorList>
    </citation>
    <scope>NUCLEOTIDE SEQUENCE [MRNA]</scope>
    <scope>FUNCTION</scope>
    <scope>TISSUE SPECIFICITY</scope>
    <source>
        <tissue>Brain</tissue>
    </source>
</reference>
<reference key="2">
    <citation type="journal article" date="1990" name="Cold Spring Harb. Symp. Quant. Biol.">
        <title>The GABAA receptor family: molecular and functional diversity.</title>
        <authorList>
            <person name="Seeburg P.H."/>
            <person name="Wisden W."/>
            <person name="Verdoorn T."/>
            <person name="Pritchett D."/>
            <person name="Werner P."/>
            <person name="Herb A."/>
            <person name="Lueddens H."/>
            <person name="Sprengel R."/>
            <person name="Sakmann B."/>
        </authorList>
    </citation>
    <scope>NUCLEOTIDE SEQUENCE [GENOMIC DNA]</scope>
</reference>
<reference key="3">
    <citation type="journal article" date="2004" name="Nature">
        <title>Genome sequence of the Brown Norway rat yields insights into mammalian evolution.</title>
        <authorList>
            <person name="Gibbs R.A."/>
            <person name="Weinstock G.M."/>
            <person name="Metzker M.L."/>
            <person name="Muzny D.M."/>
            <person name="Sodergren E.J."/>
            <person name="Scherer S."/>
            <person name="Scott G."/>
            <person name="Steffen D."/>
            <person name="Worley K.C."/>
            <person name="Burch P.E."/>
            <person name="Okwuonu G."/>
            <person name="Hines S."/>
            <person name="Lewis L."/>
            <person name="Deramo C."/>
            <person name="Delgado O."/>
            <person name="Dugan-Rocha S."/>
            <person name="Miner G."/>
            <person name="Morgan M."/>
            <person name="Hawes A."/>
            <person name="Gill R."/>
            <person name="Holt R.A."/>
            <person name="Adams M.D."/>
            <person name="Amanatides P.G."/>
            <person name="Baden-Tillson H."/>
            <person name="Barnstead M."/>
            <person name="Chin S."/>
            <person name="Evans C.A."/>
            <person name="Ferriera S."/>
            <person name="Fosler C."/>
            <person name="Glodek A."/>
            <person name="Gu Z."/>
            <person name="Jennings D."/>
            <person name="Kraft C.L."/>
            <person name="Nguyen T."/>
            <person name="Pfannkoch C.M."/>
            <person name="Sitter C."/>
            <person name="Sutton G.G."/>
            <person name="Venter J.C."/>
            <person name="Woodage T."/>
            <person name="Smith D."/>
            <person name="Lee H.-M."/>
            <person name="Gustafson E."/>
            <person name="Cahill P."/>
            <person name="Kana A."/>
            <person name="Doucette-Stamm L."/>
            <person name="Weinstock K."/>
            <person name="Fechtel K."/>
            <person name="Weiss R.B."/>
            <person name="Dunn D.M."/>
            <person name="Green E.D."/>
            <person name="Blakesley R.W."/>
            <person name="Bouffard G.G."/>
            <person name="De Jong P.J."/>
            <person name="Osoegawa K."/>
            <person name="Zhu B."/>
            <person name="Marra M."/>
            <person name="Schein J."/>
            <person name="Bosdet I."/>
            <person name="Fjell C."/>
            <person name="Jones S."/>
            <person name="Krzywinski M."/>
            <person name="Mathewson C."/>
            <person name="Siddiqui A."/>
            <person name="Wye N."/>
            <person name="McPherson J."/>
            <person name="Zhao S."/>
            <person name="Fraser C.M."/>
            <person name="Shetty J."/>
            <person name="Shatsman S."/>
            <person name="Geer K."/>
            <person name="Chen Y."/>
            <person name="Abramzon S."/>
            <person name="Nierman W.C."/>
            <person name="Havlak P.H."/>
            <person name="Chen R."/>
            <person name="Durbin K.J."/>
            <person name="Egan A."/>
            <person name="Ren Y."/>
            <person name="Song X.-Z."/>
            <person name="Li B."/>
            <person name="Liu Y."/>
            <person name="Qin X."/>
            <person name="Cawley S."/>
            <person name="Cooney A.J."/>
            <person name="D'Souza L.M."/>
            <person name="Martin K."/>
            <person name="Wu J.Q."/>
            <person name="Gonzalez-Garay M.L."/>
            <person name="Jackson A.R."/>
            <person name="Kalafus K.J."/>
            <person name="McLeod M.P."/>
            <person name="Milosavljevic A."/>
            <person name="Virk D."/>
            <person name="Volkov A."/>
            <person name="Wheeler D.A."/>
            <person name="Zhang Z."/>
            <person name="Bailey J.A."/>
            <person name="Eichler E.E."/>
            <person name="Tuzun E."/>
            <person name="Birney E."/>
            <person name="Mongin E."/>
            <person name="Ureta-Vidal A."/>
            <person name="Woodwark C."/>
            <person name="Zdobnov E."/>
            <person name="Bork P."/>
            <person name="Suyama M."/>
            <person name="Torrents D."/>
            <person name="Alexandersson M."/>
            <person name="Trask B.J."/>
            <person name="Young J.M."/>
            <person name="Huang H."/>
            <person name="Wang H."/>
            <person name="Xing H."/>
            <person name="Daniels S."/>
            <person name="Gietzen D."/>
            <person name="Schmidt J."/>
            <person name="Stevens K."/>
            <person name="Vitt U."/>
            <person name="Wingrove J."/>
            <person name="Camara F."/>
            <person name="Mar Alba M."/>
            <person name="Abril J.F."/>
            <person name="Guigo R."/>
            <person name="Smit A."/>
            <person name="Dubchak I."/>
            <person name="Rubin E.M."/>
            <person name="Couronne O."/>
            <person name="Poliakov A."/>
            <person name="Huebner N."/>
            <person name="Ganten D."/>
            <person name="Goesele C."/>
            <person name="Hummel O."/>
            <person name="Kreitler T."/>
            <person name="Lee Y.-A."/>
            <person name="Monti J."/>
            <person name="Schulz H."/>
            <person name="Zimdahl H."/>
            <person name="Himmelbauer H."/>
            <person name="Lehrach H."/>
            <person name="Jacob H.J."/>
            <person name="Bromberg S."/>
            <person name="Gullings-Handley J."/>
            <person name="Jensen-Seaman M.I."/>
            <person name="Kwitek A.E."/>
            <person name="Lazar J."/>
            <person name="Pasko D."/>
            <person name="Tonellato P.J."/>
            <person name="Twigger S."/>
            <person name="Ponting C.P."/>
            <person name="Duarte J.M."/>
            <person name="Rice S."/>
            <person name="Goodstadt L."/>
            <person name="Beatson S.A."/>
            <person name="Emes R.D."/>
            <person name="Winter E.E."/>
            <person name="Webber C."/>
            <person name="Brandt P."/>
            <person name="Nyakatura G."/>
            <person name="Adetobi M."/>
            <person name="Chiaromonte F."/>
            <person name="Elnitski L."/>
            <person name="Eswara P."/>
            <person name="Hardison R.C."/>
            <person name="Hou M."/>
            <person name="Kolbe D."/>
            <person name="Makova K."/>
            <person name="Miller W."/>
            <person name="Nekrutenko A."/>
            <person name="Riemer C."/>
            <person name="Schwartz S."/>
            <person name="Taylor J."/>
            <person name="Yang S."/>
            <person name="Zhang Y."/>
            <person name="Lindpaintner K."/>
            <person name="Andrews T.D."/>
            <person name="Caccamo M."/>
            <person name="Clamp M."/>
            <person name="Clarke L."/>
            <person name="Curwen V."/>
            <person name="Durbin R.M."/>
            <person name="Eyras E."/>
            <person name="Searle S.M."/>
            <person name="Cooper G.M."/>
            <person name="Batzoglou S."/>
            <person name="Brudno M."/>
            <person name="Sidow A."/>
            <person name="Stone E.A."/>
            <person name="Payseur B.A."/>
            <person name="Bourque G."/>
            <person name="Lopez-Otin C."/>
            <person name="Puente X.S."/>
            <person name="Chakrabarti K."/>
            <person name="Chatterji S."/>
            <person name="Dewey C."/>
            <person name="Pachter L."/>
            <person name="Bray N."/>
            <person name="Yap V.B."/>
            <person name="Caspi A."/>
            <person name="Tesler G."/>
            <person name="Pevzner P.A."/>
            <person name="Haussler D."/>
            <person name="Roskin K.M."/>
            <person name="Baertsch R."/>
            <person name="Clawson H."/>
            <person name="Furey T.S."/>
            <person name="Hinrichs A.S."/>
            <person name="Karolchik D."/>
            <person name="Kent W.J."/>
            <person name="Rosenbloom K.R."/>
            <person name="Trumbower H."/>
            <person name="Weirauch M."/>
            <person name="Cooper D.N."/>
            <person name="Stenson P.D."/>
            <person name="Ma B."/>
            <person name="Brent M."/>
            <person name="Arumugam M."/>
            <person name="Shteynberg D."/>
            <person name="Copley R.R."/>
            <person name="Taylor M.S."/>
            <person name="Riethman H."/>
            <person name="Mudunuri U."/>
            <person name="Peterson J."/>
            <person name="Guyer M."/>
            <person name="Felsenfeld A."/>
            <person name="Old S."/>
            <person name="Mockrin S."/>
            <person name="Collins F.S."/>
        </authorList>
    </citation>
    <scope>NUCLEOTIDE SEQUENCE [LARGE SCALE GENOMIC DNA]</scope>
    <source>
        <strain>Brown Norway</strain>
    </source>
</reference>
<reference key="4">
    <citation type="journal article" date="2006" name="J. Biol. Chem.">
        <title>A novel function of ionotropic gamma-aminobutyric acid receptors involving alveolar fluid homeostasis.</title>
        <authorList>
            <person name="Jin N."/>
            <person name="Kolliputi N."/>
            <person name="Gou D."/>
            <person name="Weng T."/>
            <person name="Liu L."/>
        </authorList>
    </citation>
    <scope>TISSUE SPECIFICITY</scope>
</reference>
<reference key="5">
    <citation type="journal article" date="2012" name="Nat. Commun.">
        <title>Quantitative maps of protein phosphorylation sites across 14 different rat organs and tissues.</title>
        <authorList>
            <person name="Lundby A."/>
            <person name="Secher A."/>
            <person name="Lage K."/>
            <person name="Nordsborg N.B."/>
            <person name="Dmytriyev A."/>
            <person name="Lundby C."/>
            <person name="Olsen J.V."/>
        </authorList>
    </citation>
    <scope>IDENTIFICATION BY MASS SPECTROMETRY [LARGE SCALE ANALYSIS]</scope>
</reference>
<reference key="6">
    <citation type="journal article" date="2013" name="J. Proteome Res.">
        <title>Site-specific glycan-peptide analysis for determination of N-glycoproteome heterogeneity.</title>
        <authorList>
            <person name="Parker B.L."/>
            <person name="Thaysen-Andersen M."/>
            <person name="Solis N."/>
            <person name="Scott N.E."/>
            <person name="Larsen M.R."/>
            <person name="Graham M.E."/>
            <person name="Packer N.H."/>
            <person name="Cordwell S.J."/>
        </authorList>
    </citation>
    <scope>GLYCOSYLATION [LARGE SCALE ANALYSIS] AT ASN-163</scope>
    <scope>IDENTIFICATION BY MASS SPECTROMETRY [LARGE SCALE ANALYSIS]</scope>
    <source>
        <tissue>Brain</tissue>
    </source>
</reference>
<proteinExistence type="evidence at protein level"/>
<sequence>MITTQMWHFYVTRVGLLLLISILPGTTGQGESRRQEPGDFVKQDIGGLSPKHAPDIPDDSTDNITIFTRILDRLLDGYDNRLRPGLGDAVTEVKTDIYVTSFGPVSDTDMEYTIDVFFRQTWHDERLKFDGPMKILPLNNLLASKIWTPDTFFHNGKKSVAHNMTTPNKLLRLVDNGTLLYTMRLTIHAECPMHLEDFPMDVHACPLKFGSYAYTKAEVIYSWTLGKNKSVEVAQDGSRLNQYDLLGHVVGTEIIRSSTGEYVVMTTHFHLKRKIGYFVIQTYLPCIMTVILSQVSFWLNRESVPARTVFGVTTVLTMTTLSISARNSLPKVAYATAMDWFIAVCYAFVFSALIEFATVNYFTKRSWAWEGKKVPEALEMKKKTPAAPTKKTSTTFNIVGTTYPINLAKDTEFSTISKAAAAPSASSTPTVIASPKTTYVQDSPAETKTYNSVSKVDKISRIIFPVLFAIFNLVYWATYVNRESAIKGMIRKQ</sequence>
<feature type="signal peptide" evidence="5">
    <location>
        <begin position="1"/>
        <end position="28"/>
    </location>
</feature>
<feature type="chain" id="PRO_0000000439" description="Gamma-aminobutyric acid receptor subunit alpha-3">
    <location>
        <begin position="29"/>
        <end position="493"/>
    </location>
</feature>
<feature type="topological domain" description="Extracellular" evidence="9">
    <location>
        <begin position="29"/>
        <end position="276"/>
    </location>
</feature>
<feature type="transmembrane region" description="Helical" evidence="9">
    <location>
        <begin position="277"/>
        <end position="298"/>
    </location>
</feature>
<feature type="transmembrane region" description="Helical" evidence="9">
    <location>
        <begin position="304"/>
        <end position="325"/>
    </location>
</feature>
<feature type="transmembrane region" description="Helical" evidence="9">
    <location>
        <begin position="338"/>
        <end position="359"/>
    </location>
</feature>
<feature type="topological domain" description="Cytoplasmic" evidence="9">
    <location>
        <begin position="360"/>
        <end position="458"/>
    </location>
</feature>
<feature type="transmembrane region" description="Helical" evidence="9">
    <location>
        <begin position="459"/>
        <end position="480"/>
    </location>
</feature>
<feature type="region of interest" description="Disordered" evidence="6">
    <location>
        <begin position="27"/>
        <end position="54"/>
    </location>
</feature>
<feature type="compositionally biased region" description="Basic and acidic residues" evidence="6">
    <location>
        <begin position="31"/>
        <end position="42"/>
    </location>
</feature>
<feature type="binding site" evidence="1">
    <location>
        <position position="119"/>
    </location>
    <ligand>
        <name>4-aminobutanoate</name>
        <dbReference type="ChEBI" id="CHEBI:59888"/>
        <note>ligand shared with the neighboring beta subunit</note>
    </ligand>
</feature>
<feature type="binding site" evidence="4">
    <location>
        <position position="182"/>
    </location>
    <ligand>
        <name>4-aminobutanoate</name>
        <dbReference type="ChEBI" id="CHEBI:59888"/>
        <note>ligand shared with the neighboring beta subunit</note>
    </ligand>
</feature>
<feature type="modified residue" description="Phosphoserine" evidence="2">
    <location>
        <position position="427"/>
    </location>
</feature>
<feature type="modified residue" description="Phosphothreonine" evidence="2">
    <location>
        <position position="428"/>
    </location>
</feature>
<feature type="modified residue" description="Phosphoserine" evidence="2">
    <location>
        <position position="434"/>
    </location>
</feature>
<feature type="modified residue" description="Phosphoserine" evidence="2">
    <location>
        <position position="443"/>
    </location>
</feature>
<feature type="glycosylation site" description="N-linked (GlcNAc...) asparagine" evidence="5">
    <location>
        <position position="63"/>
    </location>
</feature>
<feature type="glycosylation site" description="N-linked (GlcNAc...) asparagine" evidence="11">
    <location>
        <position position="163"/>
    </location>
</feature>
<feature type="glycosylation site" description="N-linked (GlcNAc...) asparagine" evidence="5">
    <location>
        <position position="176"/>
    </location>
</feature>
<feature type="glycosylation site" description="N-linked (GlcNAc...) asparagine" evidence="5">
    <location>
        <position position="228"/>
    </location>
</feature>
<feature type="disulfide bond" evidence="1">
    <location>
        <begin position="191"/>
        <end position="205"/>
    </location>
</feature>
<feature type="sequence conflict" description="In Ref. 2; AAC42031." evidence="9" ref="2">
    <original>V</original>
    <variation>M</variation>
    <location>
        <position position="160"/>
    </location>
</feature>
<feature type="sequence conflict" description="In Ref. 2; AAC42031." evidence="9" ref="2">
    <original>S</original>
    <variation>T</variation>
    <location>
        <position position="324"/>
    </location>
</feature>
<feature type="sequence conflict" description="In Ref. 1; CAA36247 and 2; AAC42031." evidence="9" ref="1 2">
    <original>I</original>
    <variation>M</variation>
    <location>
        <position position="342"/>
    </location>
</feature>
<feature type="sequence conflict" description="In Ref. 1; CAA36247." evidence="9" ref="1">
    <original>K</original>
    <variation>L</variation>
    <location>
        <position position="409"/>
    </location>
</feature>
<evidence type="ECO:0000250" key="1">
    <source>
        <dbReference type="UniProtKB" id="P14867"/>
    </source>
</evidence>
<evidence type="ECO:0000250" key="2">
    <source>
        <dbReference type="UniProtKB" id="P26049"/>
    </source>
</evidence>
<evidence type="ECO:0000250" key="3">
    <source>
        <dbReference type="UniProtKB" id="P34903"/>
    </source>
</evidence>
<evidence type="ECO:0000250" key="4">
    <source>
        <dbReference type="UniProtKB" id="P62813"/>
    </source>
</evidence>
<evidence type="ECO:0000255" key="5"/>
<evidence type="ECO:0000256" key="6">
    <source>
        <dbReference type="SAM" id="MobiDB-lite"/>
    </source>
</evidence>
<evidence type="ECO:0000269" key="7">
    <source>
    </source>
</evidence>
<evidence type="ECO:0000269" key="8">
    <source>
    </source>
</evidence>
<evidence type="ECO:0000305" key="9"/>
<evidence type="ECO:0000312" key="10">
    <source>
        <dbReference type="RGD" id="2648"/>
    </source>
</evidence>
<evidence type="ECO:0007744" key="11">
    <source>
    </source>
</evidence>
<organism>
    <name type="scientific">Rattus norvegicus</name>
    <name type="common">Rat</name>
    <dbReference type="NCBI Taxonomy" id="10116"/>
    <lineage>
        <taxon>Eukaryota</taxon>
        <taxon>Metazoa</taxon>
        <taxon>Chordata</taxon>
        <taxon>Craniata</taxon>
        <taxon>Vertebrata</taxon>
        <taxon>Euteleostomi</taxon>
        <taxon>Mammalia</taxon>
        <taxon>Eutheria</taxon>
        <taxon>Euarchontoglires</taxon>
        <taxon>Glires</taxon>
        <taxon>Rodentia</taxon>
        <taxon>Myomorpha</taxon>
        <taxon>Muroidea</taxon>
        <taxon>Muridae</taxon>
        <taxon>Murinae</taxon>
        <taxon>Rattus</taxon>
    </lineage>
</organism>
<dbReference type="EMBL" id="X51991">
    <property type="protein sequence ID" value="CAA36247.1"/>
    <property type="molecule type" value="mRNA"/>
</dbReference>
<dbReference type="EMBL" id="L08492">
    <property type="protein sequence ID" value="AAC42031.1"/>
    <property type="molecule type" value="Genomic_DNA"/>
</dbReference>
<dbReference type="EMBL" id="AABR07042312">
    <property type="status" value="NOT_ANNOTATED_CDS"/>
    <property type="molecule type" value="Genomic_DNA"/>
</dbReference>
<dbReference type="EMBL" id="AABR07042313">
    <property type="status" value="NOT_ANNOTATED_CDS"/>
    <property type="molecule type" value="Genomic_DNA"/>
</dbReference>
<dbReference type="EMBL" id="AABR07042314">
    <property type="status" value="NOT_ANNOTATED_CDS"/>
    <property type="molecule type" value="Genomic_DNA"/>
</dbReference>
<dbReference type="EMBL" id="AABR07042315">
    <property type="status" value="NOT_ANNOTATED_CDS"/>
    <property type="molecule type" value="Genomic_DNA"/>
</dbReference>
<dbReference type="EMBL" id="AABR07042316">
    <property type="status" value="NOT_ANNOTATED_CDS"/>
    <property type="molecule type" value="Genomic_DNA"/>
</dbReference>
<dbReference type="EMBL" id="AABR07042317">
    <property type="status" value="NOT_ANNOTATED_CDS"/>
    <property type="molecule type" value="Genomic_DNA"/>
</dbReference>
<dbReference type="EMBL" id="AABR07042318">
    <property type="status" value="NOT_ANNOTATED_CDS"/>
    <property type="molecule type" value="Genomic_DNA"/>
</dbReference>
<dbReference type="PIR" id="A34130">
    <property type="entry name" value="A34130"/>
</dbReference>
<dbReference type="RefSeq" id="NP_058765.3">
    <property type="nucleotide sequence ID" value="NM_017069.3"/>
</dbReference>
<dbReference type="RefSeq" id="XP_017457405.1">
    <property type="nucleotide sequence ID" value="XM_017601916.3"/>
</dbReference>
<dbReference type="PDB" id="4TK1">
    <property type="method" value="X-ray"/>
    <property type="resolution" value="2.70 A"/>
    <property type="chains" value="C/D=396-406"/>
</dbReference>
<dbReference type="PDB" id="4TK2">
    <property type="method" value="X-ray"/>
    <property type="resolution" value="4.10 A"/>
    <property type="chains" value="C/D=396-406"/>
</dbReference>
<dbReference type="PDB" id="4TK3">
    <property type="method" value="X-ray"/>
    <property type="resolution" value="2.70 A"/>
    <property type="chains" value="C/D=396-406"/>
</dbReference>
<dbReference type="PDB" id="4TK4">
    <property type="method" value="X-ray"/>
    <property type="resolution" value="3.60 A"/>
    <property type="chains" value="C/D=396-406"/>
</dbReference>
<dbReference type="PDB" id="4U90">
    <property type="method" value="X-ray"/>
    <property type="resolution" value="2.00 A"/>
    <property type="chains" value="D/E=396-404"/>
</dbReference>
<dbReference type="PDB" id="6HSN">
    <property type="method" value="X-ray"/>
    <property type="resolution" value="1.55 A"/>
    <property type="chains" value="D/E=396-405"/>
</dbReference>
<dbReference type="PDBsum" id="4TK1"/>
<dbReference type="PDBsum" id="4TK2"/>
<dbReference type="PDBsum" id="4TK3"/>
<dbReference type="PDBsum" id="4TK4"/>
<dbReference type="PDBsum" id="4U90"/>
<dbReference type="PDBsum" id="6HSN"/>
<dbReference type="SMR" id="P20236"/>
<dbReference type="ComplexPortal" id="CPX-409">
    <property type="entry name" value="GABA-A receptor, alpha3-beta3-gamma2"/>
</dbReference>
<dbReference type="CORUM" id="P20236"/>
<dbReference type="FunCoup" id="P20236">
    <property type="interactions" value="229"/>
</dbReference>
<dbReference type="IntAct" id="P20236">
    <property type="interactions" value="1"/>
</dbReference>
<dbReference type="STRING" id="10116.ENSRNOP00000075419"/>
<dbReference type="BindingDB" id="P20236"/>
<dbReference type="ChEMBL" id="CHEMBL328"/>
<dbReference type="DrugCentral" id="P20236"/>
<dbReference type="GlyCosmos" id="P20236">
    <property type="glycosylation" value="4 sites, 9 glycans"/>
</dbReference>
<dbReference type="GlyGen" id="P20236">
    <property type="glycosylation" value="4 sites, 9 N-linked glycans (1 site)"/>
</dbReference>
<dbReference type="iPTMnet" id="P20236"/>
<dbReference type="PhosphoSitePlus" id="P20236"/>
<dbReference type="PaxDb" id="10116-ENSRNOP00000050712"/>
<dbReference type="GeneID" id="24947"/>
<dbReference type="KEGG" id="rno:24947"/>
<dbReference type="AGR" id="RGD:2648"/>
<dbReference type="CTD" id="2556"/>
<dbReference type="RGD" id="2648">
    <property type="gene designation" value="Gabra3"/>
</dbReference>
<dbReference type="VEuPathDB" id="HostDB:ENSRNOG00000056558"/>
<dbReference type="eggNOG" id="KOG3642">
    <property type="taxonomic scope" value="Eukaryota"/>
</dbReference>
<dbReference type="HOGENOM" id="CLU_010920_2_1_1"/>
<dbReference type="InParanoid" id="P20236"/>
<dbReference type="OrthoDB" id="45532at9989"/>
<dbReference type="PhylomeDB" id="P20236"/>
<dbReference type="TreeFam" id="TF315453"/>
<dbReference type="Reactome" id="R-RNO-977443">
    <property type="pathway name" value="GABA receptor activation"/>
</dbReference>
<dbReference type="CD-CODE" id="A7E9CBB4">
    <property type="entry name" value="Postsynaptic density"/>
</dbReference>
<dbReference type="EvolutionaryTrace" id="P20236"/>
<dbReference type="PRO" id="PR:P20236"/>
<dbReference type="Proteomes" id="UP000002494">
    <property type="component" value="Chromosome X"/>
</dbReference>
<dbReference type="Bgee" id="ENSRNOG00000056558">
    <property type="expression patterns" value="Expressed in frontal cortex and 4 other cell types or tissues"/>
</dbReference>
<dbReference type="GO" id="GO:0034707">
    <property type="term" value="C:chloride channel complex"/>
    <property type="evidence" value="ECO:0007669"/>
    <property type="project" value="UniProtKB-KW"/>
</dbReference>
<dbReference type="GO" id="GO:0032590">
    <property type="term" value="C:dendrite membrane"/>
    <property type="evidence" value="ECO:0000318"/>
    <property type="project" value="GO_Central"/>
</dbReference>
<dbReference type="GO" id="GO:1902711">
    <property type="term" value="C:GABA-A receptor complex"/>
    <property type="evidence" value="ECO:0000318"/>
    <property type="project" value="GO_Central"/>
</dbReference>
<dbReference type="GO" id="GO:0098982">
    <property type="term" value="C:GABA-ergic synapse"/>
    <property type="evidence" value="ECO:0000314"/>
    <property type="project" value="SynGO"/>
</dbReference>
<dbReference type="GO" id="GO:0098794">
    <property type="term" value="C:postsynapse"/>
    <property type="evidence" value="ECO:0000318"/>
    <property type="project" value="GO_Central"/>
</dbReference>
<dbReference type="GO" id="GO:0099634">
    <property type="term" value="C:postsynaptic specialization membrane"/>
    <property type="evidence" value="ECO:0000314"/>
    <property type="project" value="SynGO"/>
</dbReference>
<dbReference type="GO" id="GO:0048787">
    <property type="term" value="C:presynaptic active zone membrane"/>
    <property type="evidence" value="ECO:0000314"/>
    <property type="project" value="SynGO"/>
</dbReference>
<dbReference type="GO" id="GO:0045202">
    <property type="term" value="C:synapse"/>
    <property type="evidence" value="ECO:0000314"/>
    <property type="project" value="SynGO"/>
</dbReference>
<dbReference type="GO" id="GO:0004890">
    <property type="term" value="F:GABA-A receptor activity"/>
    <property type="evidence" value="ECO:0000314"/>
    <property type="project" value="UniProtKB"/>
</dbReference>
<dbReference type="GO" id="GO:0022851">
    <property type="term" value="F:GABA-gated chloride ion channel activity"/>
    <property type="evidence" value="ECO:0000314"/>
    <property type="project" value="UniProtKB"/>
</dbReference>
<dbReference type="GO" id="GO:0099507">
    <property type="term" value="F:ligand-gated monoatomic ion channel activity involved in regulation of presynaptic membrane potential"/>
    <property type="evidence" value="ECO:0000314"/>
    <property type="project" value="SynGO"/>
</dbReference>
<dbReference type="GO" id="GO:1904315">
    <property type="term" value="F:transmitter-gated monoatomic ion channel activity involved in regulation of postsynaptic membrane potential"/>
    <property type="evidence" value="ECO:0000314"/>
    <property type="project" value="SynGO"/>
</dbReference>
<dbReference type="GO" id="GO:0031223">
    <property type="term" value="P:auditory behavior"/>
    <property type="evidence" value="ECO:0000270"/>
    <property type="project" value="RGD"/>
</dbReference>
<dbReference type="GO" id="GO:0007268">
    <property type="term" value="P:chemical synaptic transmission"/>
    <property type="evidence" value="ECO:0000315"/>
    <property type="project" value="RGD"/>
</dbReference>
<dbReference type="GO" id="GO:1902476">
    <property type="term" value="P:chloride transmembrane transport"/>
    <property type="evidence" value="ECO:0000318"/>
    <property type="project" value="GO_Central"/>
</dbReference>
<dbReference type="GO" id="GO:0007214">
    <property type="term" value="P:gamma-aminobutyric acid signaling pathway"/>
    <property type="evidence" value="ECO:0000318"/>
    <property type="project" value="GO_Central"/>
</dbReference>
<dbReference type="GO" id="GO:1904862">
    <property type="term" value="P:inhibitory synapse assembly"/>
    <property type="evidence" value="ECO:0000318"/>
    <property type="project" value="GO_Central"/>
</dbReference>
<dbReference type="GO" id="GO:0010288">
    <property type="term" value="P:response to lead ion"/>
    <property type="evidence" value="ECO:0000270"/>
    <property type="project" value="RGD"/>
</dbReference>
<dbReference type="GO" id="GO:0051932">
    <property type="term" value="P:synaptic transmission, GABAergic"/>
    <property type="evidence" value="ECO:0000318"/>
    <property type="project" value="GO_Central"/>
</dbReference>
<dbReference type="CDD" id="cd19036">
    <property type="entry name" value="LGIC_ECD_GABAAR_A3"/>
    <property type="match status" value="1"/>
</dbReference>
<dbReference type="CDD" id="cd19052">
    <property type="entry name" value="LGIC_TM_GABAAR_alpha"/>
    <property type="match status" value="1"/>
</dbReference>
<dbReference type="FunFam" id="2.70.170.10:FF:000001">
    <property type="entry name" value="Gamma-aminobutyric acid A receptor subunit alpha-2"/>
    <property type="match status" value="1"/>
</dbReference>
<dbReference type="FunFam" id="1.20.58.390:FF:000002">
    <property type="entry name" value="Putative gamma-aminobutyric acid receptor subunit alpha-5"/>
    <property type="match status" value="1"/>
</dbReference>
<dbReference type="Gene3D" id="2.70.170.10">
    <property type="entry name" value="Neurotransmitter-gated ion-channel ligand-binding domain"/>
    <property type="match status" value="1"/>
</dbReference>
<dbReference type="Gene3D" id="1.20.58.390">
    <property type="entry name" value="Neurotransmitter-gated ion-channel transmembrane domain"/>
    <property type="match status" value="1"/>
</dbReference>
<dbReference type="InterPro" id="IPR006028">
    <property type="entry name" value="GABAA/Glycine_rcpt"/>
</dbReference>
<dbReference type="InterPro" id="IPR001390">
    <property type="entry name" value="GABAAa_rcpt"/>
</dbReference>
<dbReference type="InterPro" id="IPR005433">
    <property type="entry name" value="GABBAa3_rcpt"/>
</dbReference>
<dbReference type="InterPro" id="IPR047024">
    <property type="entry name" value="Gabra-1-6_TM"/>
</dbReference>
<dbReference type="InterPro" id="IPR006202">
    <property type="entry name" value="Neur_chan_lig-bd"/>
</dbReference>
<dbReference type="InterPro" id="IPR036734">
    <property type="entry name" value="Neur_chan_lig-bd_sf"/>
</dbReference>
<dbReference type="InterPro" id="IPR006201">
    <property type="entry name" value="Neur_channel"/>
</dbReference>
<dbReference type="InterPro" id="IPR036719">
    <property type="entry name" value="Neuro-gated_channel_TM_sf"/>
</dbReference>
<dbReference type="InterPro" id="IPR038050">
    <property type="entry name" value="Neuro_actylchol_rec"/>
</dbReference>
<dbReference type="InterPro" id="IPR006029">
    <property type="entry name" value="Neurotrans-gated_channel_TM"/>
</dbReference>
<dbReference type="InterPro" id="IPR018000">
    <property type="entry name" value="Neurotransmitter_ion_chnl_CS"/>
</dbReference>
<dbReference type="NCBIfam" id="TIGR00860">
    <property type="entry name" value="LIC"/>
    <property type="match status" value="1"/>
</dbReference>
<dbReference type="PANTHER" id="PTHR18945">
    <property type="entry name" value="NEUROTRANSMITTER GATED ION CHANNEL"/>
    <property type="match status" value="1"/>
</dbReference>
<dbReference type="Pfam" id="PF02931">
    <property type="entry name" value="Neur_chan_LBD"/>
    <property type="match status" value="1"/>
</dbReference>
<dbReference type="Pfam" id="PF02932">
    <property type="entry name" value="Neur_chan_memb"/>
    <property type="match status" value="1"/>
</dbReference>
<dbReference type="PRINTS" id="PR01079">
    <property type="entry name" value="GABAARALPHA"/>
</dbReference>
<dbReference type="PRINTS" id="PR01616">
    <property type="entry name" value="GABAARALPHA3"/>
</dbReference>
<dbReference type="PRINTS" id="PR00253">
    <property type="entry name" value="GABAARECEPTR"/>
</dbReference>
<dbReference type="PRINTS" id="PR00252">
    <property type="entry name" value="NRIONCHANNEL"/>
</dbReference>
<dbReference type="SUPFAM" id="SSF90112">
    <property type="entry name" value="Neurotransmitter-gated ion-channel transmembrane pore"/>
    <property type="match status" value="1"/>
</dbReference>
<dbReference type="SUPFAM" id="SSF63712">
    <property type="entry name" value="Nicotinic receptor ligand binding domain-like"/>
    <property type="match status" value="1"/>
</dbReference>
<dbReference type="PROSITE" id="PS00236">
    <property type="entry name" value="NEUROTR_ION_CHANNEL"/>
    <property type="match status" value="1"/>
</dbReference>
<accession>P20236</accession>
<accession>F1LNZ5</accession>
<name>GBRA3_RAT</name>
<gene>
    <name evidence="10" type="primary">Gabra3</name>
    <name type="synonym">Gabra-3</name>
</gene>
<keyword id="KW-0002">3D-structure</keyword>
<keyword id="KW-1003">Cell membrane</keyword>
<keyword id="KW-0868">Chloride</keyword>
<keyword id="KW-0869">Chloride channel</keyword>
<keyword id="KW-1015">Disulfide bond</keyword>
<keyword id="KW-0325">Glycoprotein</keyword>
<keyword id="KW-0407">Ion channel</keyword>
<keyword id="KW-0406">Ion transport</keyword>
<keyword id="KW-1071">Ligand-gated ion channel</keyword>
<keyword id="KW-0472">Membrane</keyword>
<keyword id="KW-0597">Phosphoprotein</keyword>
<keyword id="KW-0628">Postsynaptic cell membrane</keyword>
<keyword id="KW-0675">Receptor</keyword>
<keyword id="KW-1185">Reference proteome</keyword>
<keyword id="KW-0732">Signal</keyword>
<keyword id="KW-0770">Synapse</keyword>
<keyword id="KW-0812">Transmembrane</keyword>
<keyword id="KW-1133">Transmembrane helix</keyword>
<keyword id="KW-0813">Transport</keyword>
<protein>
    <recommendedName>
        <fullName evidence="2">Gamma-aminobutyric acid receptor subunit alpha-3</fullName>
    </recommendedName>
    <alternativeName>
        <fullName evidence="2">GABA(A) receptor subunit alpha-3</fullName>
        <shortName>GABAAR subunit alpha-3</shortName>
    </alternativeName>
</protein>